<gene>
    <name evidence="1" type="primary">rrp4</name>
    <name type="ordered locus">Mfer_0823</name>
</gene>
<comment type="function">
    <text evidence="1">Non-catalytic component of the exosome, which is a complex involved in RNA degradation. Increases the RNA binding and the efficiency of RNA degradation. Confers strong poly(A) specificity to the exosome.</text>
</comment>
<comment type="subunit">
    <text evidence="1">Component of the archaeal exosome complex. Forms a trimer of Rrp4 and/or Csl4 subunits. The trimer associates with a hexameric ring-like arrangement composed of 3 Rrp41-Rrp42 heterodimers.</text>
</comment>
<comment type="subcellular location">
    <subcellularLocation>
        <location evidence="1">Cytoplasm</location>
    </subcellularLocation>
</comment>
<comment type="similarity">
    <text evidence="1">Belongs to the RRP4 family.</text>
</comment>
<keyword id="KW-0963">Cytoplasm</keyword>
<keyword id="KW-0271">Exosome</keyword>
<keyword id="KW-1185">Reference proteome</keyword>
<keyword id="KW-0694">RNA-binding</keyword>
<reference key="1">
    <citation type="journal article" date="2010" name="Stand. Genomic Sci.">
        <title>Complete genome sequence of Methanothermus fervidus type strain (V24S).</title>
        <authorList>
            <person name="Anderson I."/>
            <person name="Djao O.D."/>
            <person name="Misra M."/>
            <person name="Chertkov O."/>
            <person name="Nolan M."/>
            <person name="Lucas S."/>
            <person name="Lapidus A."/>
            <person name="Del Rio T.G."/>
            <person name="Tice H."/>
            <person name="Cheng J.F."/>
            <person name="Tapia R."/>
            <person name="Han C."/>
            <person name="Goodwin L."/>
            <person name="Pitluck S."/>
            <person name="Liolios K."/>
            <person name="Ivanova N."/>
            <person name="Mavromatis K."/>
            <person name="Mikhailova N."/>
            <person name="Pati A."/>
            <person name="Brambilla E."/>
            <person name="Chen A."/>
            <person name="Palaniappan K."/>
            <person name="Land M."/>
            <person name="Hauser L."/>
            <person name="Chang Y.J."/>
            <person name="Jeffries C.D."/>
            <person name="Sikorski J."/>
            <person name="Spring S."/>
            <person name="Rohde M."/>
            <person name="Eichinger K."/>
            <person name="Huber H."/>
            <person name="Wirth R."/>
            <person name="Goker M."/>
            <person name="Detter J.C."/>
            <person name="Woyke T."/>
            <person name="Bristow J."/>
            <person name="Eisen J.A."/>
            <person name="Markowitz V."/>
            <person name="Hugenholtz P."/>
            <person name="Klenk H.P."/>
            <person name="Kyrpides N.C."/>
        </authorList>
    </citation>
    <scope>NUCLEOTIDE SEQUENCE [LARGE SCALE GENOMIC DNA]</scope>
    <source>
        <strain>ATCC 43054 / DSM 2088 / JCM 10308 / V24 S</strain>
    </source>
</reference>
<name>RRP4_METFV</name>
<dbReference type="EMBL" id="CP002278">
    <property type="protein sequence ID" value="ADP77622.1"/>
    <property type="molecule type" value="Genomic_DNA"/>
</dbReference>
<dbReference type="SMR" id="E3GZ90"/>
<dbReference type="STRING" id="523846.Mfer_0823"/>
<dbReference type="KEGG" id="mfv:Mfer_0823"/>
<dbReference type="HOGENOM" id="CLU_071769_0_0_2"/>
<dbReference type="OrthoDB" id="35160at2157"/>
<dbReference type="Proteomes" id="UP000002315">
    <property type="component" value="Chromosome"/>
</dbReference>
<dbReference type="GO" id="GO:0005737">
    <property type="term" value="C:cytoplasm"/>
    <property type="evidence" value="ECO:0007669"/>
    <property type="project" value="UniProtKB-SubCell"/>
</dbReference>
<dbReference type="GO" id="GO:0000178">
    <property type="term" value="C:exosome (RNase complex)"/>
    <property type="evidence" value="ECO:0007669"/>
    <property type="project" value="UniProtKB-KW"/>
</dbReference>
<dbReference type="GO" id="GO:0008143">
    <property type="term" value="F:poly(A) binding"/>
    <property type="evidence" value="ECO:0007669"/>
    <property type="project" value="InterPro"/>
</dbReference>
<dbReference type="GO" id="GO:0071034">
    <property type="term" value="P:CUT catabolic process"/>
    <property type="evidence" value="ECO:0007669"/>
    <property type="project" value="TreeGrafter"/>
</dbReference>
<dbReference type="GO" id="GO:0000467">
    <property type="term" value="P:exonucleolytic trimming to generate mature 3'-end of 5.8S rRNA from tricistronic rRNA transcript (SSU-rRNA, 5.8S rRNA, LSU-rRNA)"/>
    <property type="evidence" value="ECO:0007669"/>
    <property type="project" value="TreeGrafter"/>
</dbReference>
<dbReference type="GO" id="GO:0071051">
    <property type="term" value="P:poly(A)-dependent snoRNA 3'-end processing"/>
    <property type="evidence" value="ECO:0007669"/>
    <property type="project" value="TreeGrafter"/>
</dbReference>
<dbReference type="GO" id="GO:0006401">
    <property type="term" value="P:RNA catabolic process"/>
    <property type="evidence" value="ECO:0007669"/>
    <property type="project" value="UniProtKB-UniRule"/>
</dbReference>
<dbReference type="GO" id="GO:0034475">
    <property type="term" value="P:U4 snRNA 3'-end processing"/>
    <property type="evidence" value="ECO:0007669"/>
    <property type="project" value="TreeGrafter"/>
</dbReference>
<dbReference type="CDD" id="cd22524">
    <property type="entry name" value="KH-I_Rrp4_prokar"/>
    <property type="match status" value="1"/>
</dbReference>
<dbReference type="CDD" id="cd05789">
    <property type="entry name" value="S1_Rrp4"/>
    <property type="match status" value="1"/>
</dbReference>
<dbReference type="Gene3D" id="2.40.50.100">
    <property type="match status" value="1"/>
</dbReference>
<dbReference type="Gene3D" id="3.30.1370.10">
    <property type="entry name" value="K Homology domain, type 1"/>
    <property type="match status" value="1"/>
</dbReference>
<dbReference type="Gene3D" id="2.40.50.140">
    <property type="entry name" value="Nucleic acid-binding proteins"/>
    <property type="match status" value="1"/>
</dbReference>
<dbReference type="HAMAP" id="MF_00623">
    <property type="entry name" value="Exosome_Rrp4"/>
    <property type="match status" value="1"/>
</dbReference>
<dbReference type="InterPro" id="IPR026699">
    <property type="entry name" value="Exosome_RNA_bind1/RRP40/RRP4"/>
</dbReference>
<dbReference type="InterPro" id="IPR004087">
    <property type="entry name" value="KH_dom"/>
</dbReference>
<dbReference type="InterPro" id="IPR004088">
    <property type="entry name" value="KH_dom_type_1"/>
</dbReference>
<dbReference type="InterPro" id="IPR036612">
    <property type="entry name" value="KH_dom_type_1_sf"/>
</dbReference>
<dbReference type="InterPro" id="IPR012340">
    <property type="entry name" value="NA-bd_OB-fold"/>
</dbReference>
<dbReference type="InterPro" id="IPR023474">
    <property type="entry name" value="Rrp4"/>
</dbReference>
<dbReference type="InterPro" id="IPR054371">
    <property type="entry name" value="RRP4_N"/>
</dbReference>
<dbReference type="InterPro" id="IPR048565">
    <property type="entry name" value="RRP4_S1"/>
</dbReference>
<dbReference type="InterPro" id="IPR003029">
    <property type="entry name" value="S1_domain"/>
</dbReference>
<dbReference type="NCBIfam" id="NF003181">
    <property type="entry name" value="PRK04163.1-1"/>
    <property type="match status" value="1"/>
</dbReference>
<dbReference type="PANTHER" id="PTHR21321:SF4">
    <property type="entry name" value="EXOSOME COMPLEX COMPONENT RRP4"/>
    <property type="match status" value="1"/>
</dbReference>
<dbReference type="PANTHER" id="PTHR21321">
    <property type="entry name" value="PNAS-3 RELATED"/>
    <property type="match status" value="1"/>
</dbReference>
<dbReference type="Pfam" id="PF22625">
    <property type="entry name" value="ECR1_N_2"/>
    <property type="match status" value="1"/>
</dbReference>
<dbReference type="Pfam" id="PF15985">
    <property type="entry name" value="KH_6"/>
    <property type="match status" value="1"/>
</dbReference>
<dbReference type="Pfam" id="PF21266">
    <property type="entry name" value="RRP4_S1"/>
    <property type="match status" value="1"/>
</dbReference>
<dbReference type="SMART" id="SM00322">
    <property type="entry name" value="KH"/>
    <property type="match status" value="1"/>
</dbReference>
<dbReference type="SMART" id="SM00316">
    <property type="entry name" value="S1"/>
    <property type="match status" value="1"/>
</dbReference>
<dbReference type="SUPFAM" id="SSF54791">
    <property type="entry name" value="Eukaryotic type KH-domain (KH-domain type I)"/>
    <property type="match status" value="1"/>
</dbReference>
<dbReference type="SUPFAM" id="SSF50249">
    <property type="entry name" value="Nucleic acid-binding proteins"/>
    <property type="match status" value="1"/>
</dbReference>
<dbReference type="SUPFAM" id="SSF110324">
    <property type="entry name" value="Ribosomal L27 protein-like"/>
    <property type="match status" value="1"/>
</dbReference>
<dbReference type="PROSITE" id="PS50084">
    <property type="entry name" value="KH_TYPE_1"/>
    <property type="match status" value="1"/>
</dbReference>
<dbReference type="PROSITE" id="PS50126">
    <property type="entry name" value="S1"/>
    <property type="match status" value="1"/>
</dbReference>
<evidence type="ECO:0000255" key="1">
    <source>
        <dbReference type="HAMAP-Rule" id="MF_00623"/>
    </source>
</evidence>
<protein>
    <recommendedName>
        <fullName evidence="1">Exosome complex component Rrp4</fullName>
    </recommendedName>
</protein>
<organism>
    <name type="scientific">Methanothermus fervidus (strain ATCC 43054 / DSM 2088 / JCM 10308 / V24 S)</name>
    <dbReference type="NCBI Taxonomy" id="523846"/>
    <lineage>
        <taxon>Archaea</taxon>
        <taxon>Methanobacteriati</taxon>
        <taxon>Methanobacteriota</taxon>
        <taxon>Methanomada group</taxon>
        <taxon>Methanobacteria</taxon>
        <taxon>Methanobacteriales</taxon>
        <taxon>Methanothermaceae</taxon>
        <taxon>Methanothermus</taxon>
    </lineage>
</organism>
<proteinExistence type="inferred from homology"/>
<sequence length="222" mass="24771">MLFVKERDIVVPGEKLAGNDYIAGRGTFIEEDKIYSSVVGLVSIKGKRIEVIPLQGKYIPKKNDSVIGKVVDVKFARWIVDIRSPYSAILPVSEVIDKGKKNLEEIFGIGDTLFLKIIEVDEVKKVKLGLHEGGPIKLEGGTLAYITPSKVPRVIGRKGSMIKMLKKLTNCEILLGQNGVIWVKGDKKMEEIVKRALEMIDREAHTSGLTDRVKEFIIRSIE</sequence>
<feature type="chain" id="PRO_0000416233" description="Exosome complex component Rrp4">
    <location>
        <begin position="1"/>
        <end position="222"/>
    </location>
</feature>
<feature type="domain" description="S1 motif" evidence="1">
    <location>
        <begin position="63"/>
        <end position="131"/>
    </location>
</feature>
<feature type="domain" description="KH" evidence="1">
    <location>
        <begin position="139"/>
        <end position="200"/>
    </location>
</feature>
<accession>E3GZ90</accession>